<dbReference type="EC" id="6.1.1.3" evidence="1"/>
<dbReference type="EMBL" id="AP009049">
    <property type="protein sequence ID" value="BAH07885.1"/>
    <property type="molecule type" value="Genomic_DNA"/>
</dbReference>
<dbReference type="RefSeq" id="WP_012103541.1">
    <property type="nucleotide sequence ID" value="NC_011837.1"/>
</dbReference>
<dbReference type="SMR" id="B9E5W0"/>
<dbReference type="KEGG" id="ckr:CKR_2834"/>
<dbReference type="HOGENOM" id="CLU_008554_0_1_9"/>
<dbReference type="Proteomes" id="UP000007969">
    <property type="component" value="Chromosome"/>
</dbReference>
<dbReference type="GO" id="GO:0005737">
    <property type="term" value="C:cytoplasm"/>
    <property type="evidence" value="ECO:0007669"/>
    <property type="project" value="UniProtKB-SubCell"/>
</dbReference>
<dbReference type="GO" id="GO:0005524">
    <property type="term" value="F:ATP binding"/>
    <property type="evidence" value="ECO:0007669"/>
    <property type="project" value="UniProtKB-UniRule"/>
</dbReference>
<dbReference type="GO" id="GO:0140096">
    <property type="term" value="F:catalytic activity, acting on a protein"/>
    <property type="evidence" value="ECO:0007669"/>
    <property type="project" value="UniProtKB-ARBA"/>
</dbReference>
<dbReference type="GO" id="GO:0046872">
    <property type="term" value="F:metal ion binding"/>
    <property type="evidence" value="ECO:0007669"/>
    <property type="project" value="UniProtKB-KW"/>
</dbReference>
<dbReference type="GO" id="GO:0004829">
    <property type="term" value="F:threonine-tRNA ligase activity"/>
    <property type="evidence" value="ECO:0007669"/>
    <property type="project" value="UniProtKB-UniRule"/>
</dbReference>
<dbReference type="GO" id="GO:0016740">
    <property type="term" value="F:transferase activity"/>
    <property type="evidence" value="ECO:0007669"/>
    <property type="project" value="UniProtKB-ARBA"/>
</dbReference>
<dbReference type="GO" id="GO:0000049">
    <property type="term" value="F:tRNA binding"/>
    <property type="evidence" value="ECO:0007669"/>
    <property type="project" value="UniProtKB-KW"/>
</dbReference>
<dbReference type="GO" id="GO:0006435">
    <property type="term" value="P:threonyl-tRNA aminoacylation"/>
    <property type="evidence" value="ECO:0007669"/>
    <property type="project" value="UniProtKB-UniRule"/>
</dbReference>
<dbReference type="CDD" id="cd01667">
    <property type="entry name" value="TGS_ThrRS"/>
    <property type="match status" value="1"/>
</dbReference>
<dbReference type="CDD" id="cd00860">
    <property type="entry name" value="ThrRS_anticodon"/>
    <property type="match status" value="1"/>
</dbReference>
<dbReference type="CDD" id="cd00771">
    <property type="entry name" value="ThrRS_core"/>
    <property type="match status" value="1"/>
</dbReference>
<dbReference type="FunFam" id="3.30.54.20:FF:000002">
    <property type="entry name" value="Threonine--tRNA ligase"/>
    <property type="match status" value="1"/>
</dbReference>
<dbReference type="FunFam" id="3.30.930.10:FF:000002">
    <property type="entry name" value="Threonine--tRNA ligase"/>
    <property type="match status" value="1"/>
</dbReference>
<dbReference type="FunFam" id="3.40.50.800:FF:000001">
    <property type="entry name" value="Threonine--tRNA ligase"/>
    <property type="match status" value="1"/>
</dbReference>
<dbReference type="FunFam" id="3.30.980.10:FF:000005">
    <property type="entry name" value="Threonyl-tRNA synthetase, mitochondrial"/>
    <property type="match status" value="1"/>
</dbReference>
<dbReference type="Gene3D" id="3.10.20.30">
    <property type="match status" value="1"/>
</dbReference>
<dbReference type="Gene3D" id="3.30.54.20">
    <property type="match status" value="1"/>
</dbReference>
<dbReference type="Gene3D" id="3.40.50.800">
    <property type="entry name" value="Anticodon-binding domain"/>
    <property type="match status" value="1"/>
</dbReference>
<dbReference type="Gene3D" id="3.30.930.10">
    <property type="entry name" value="Bira Bifunctional Protein, Domain 2"/>
    <property type="match status" value="1"/>
</dbReference>
<dbReference type="Gene3D" id="3.30.980.10">
    <property type="entry name" value="Threonyl-trna Synthetase, Chain A, domain 2"/>
    <property type="match status" value="1"/>
</dbReference>
<dbReference type="HAMAP" id="MF_00184">
    <property type="entry name" value="Thr_tRNA_synth"/>
    <property type="match status" value="1"/>
</dbReference>
<dbReference type="InterPro" id="IPR002314">
    <property type="entry name" value="aa-tRNA-synt_IIb"/>
</dbReference>
<dbReference type="InterPro" id="IPR006195">
    <property type="entry name" value="aa-tRNA-synth_II"/>
</dbReference>
<dbReference type="InterPro" id="IPR045864">
    <property type="entry name" value="aa-tRNA-synth_II/BPL/LPL"/>
</dbReference>
<dbReference type="InterPro" id="IPR004154">
    <property type="entry name" value="Anticodon-bd"/>
</dbReference>
<dbReference type="InterPro" id="IPR036621">
    <property type="entry name" value="Anticodon-bd_dom_sf"/>
</dbReference>
<dbReference type="InterPro" id="IPR012675">
    <property type="entry name" value="Beta-grasp_dom_sf"/>
</dbReference>
<dbReference type="InterPro" id="IPR004095">
    <property type="entry name" value="TGS"/>
</dbReference>
<dbReference type="InterPro" id="IPR012676">
    <property type="entry name" value="TGS-like"/>
</dbReference>
<dbReference type="InterPro" id="IPR002320">
    <property type="entry name" value="Thr-tRNA-ligase_IIa"/>
</dbReference>
<dbReference type="InterPro" id="IPR018163">
    <property type="entry name" value="Thr/Ala-tRNA-synth_IIc_edit"/>
</dbReference>
<dbReference type="InterPro" id="IPR047246">
    <property type="entry name" value="ThrRS_anticodon"/>
</dbReference>
<dbReference type="InterPro" id="IPR033728">
    <property type="entry name" value="ThrRS_core"/>
</dbReference>
<dbReference type="InterPro" id="IPR012947">
    <property type="entry name" value="tRNA_SAD"/>
</dbReference>
<dbReference type="NCBIfam" id="TIGR00418">
    <property type="entry name" value="thrS"/>
    <property type="match status" value="1"/>
</dbReference>
<dbReference type="PANTHER" id="PTHR11451:SF44">
    <property type="entry name" value="THREONINE--TRNA LIGASE, CHLOROPLASTIC_MITOCHONDRIAL 2"/>
    <property type="match status" value="1"/>
</dbReference>
<dbReference type="PANTHER" id="PTHR11451">
    <property type="entry name" value="THREONINE-TRNA LIGASE"/>
    <property type="match status" value="1"/>
</dbReference>
<dbReference type="Pfam" id="PF03129">
    <property type="entry name" value="HGTP_anticodon"/>
    <property type="match status" value="1"/>
</dbReference>
<dbReference type="Pfam" id="PF02824">
    <property type="entry name" value="TGS"/>
    <property type="match status" value="1"/>
</dbReference>
<dbReference type="Pfam" id="PF00587">
    <property type="entry name" value="tRNA-synt_2b"/>
    <property type="match status" value="1"/>
</dbReference>
<dbReference type="Pfam" id="PF07973">
    <property type="entry name" value="tRNA_SAD"/>
    <property type="match status" value="1"/>
</dbReference>
<dbReference type="PRINTS" id="PR01047">
    <property type="entry name" value="TRNASYNTHTHR"/>
</dbReference>
<dbReference type="SMART" id="SM00863">
    <property type="entry name" value="tRNA_SAD"/>
    <property type="match status" value="1"/>
</dbReference>
<dbReference type="SUPFAM" id="SSF52954">
    <property type="entry name" value="Class II aaRS ABD-related"/>
    <property type="match status" value="1"/>
</dbReference>
<dbReference type="SUPFAM" id="SSF55681">
    <property type="entry name" value="Class II aaRS and biotin synthetases"/>
    <property type="match status" value="1"/>
</dbReference>
<dbReference type="SUPFAM" id="SSF81271">
    <property type="entry name" value="TGS-like"/>
    <property type="match status" value="1"/>
</dbReference>
<dbReference type="SUPFAM" id="SSF55186">
    <property type="entry name" value="ThrRS/AlaRS common domain"/>
    <property type="match status" value="1"/>
</dbReference>
<dbReference type="PROSITE" id="PS50862">
    <property type="entry name" value="AA_TRNA_LIGASE_II"/>
    <property type="match status" value="1"/>
</dbReference>
<dbReference type="PROSITE" id="PS51880">
    <property type="entry name" value="TGS"/>
    <property type="match status" value="1"/>
</dbReference>
<keyword id="KW-0030">Aminoacyl-tRNA synthetase</keyword>
<keyword id="KW-0067">ATP-binding</keyword>
<keyword id="KW-0963">Cytoplasm</keyword>
<keyword id="KW-0436">Ligase</keyword>
<keyword id="KW-0479">Metal-binding</keyword>
<keyword id="KW-0547">Nucleotide-binding</keyword>
<keyword id="KW-0648">Protein biosynthesis</keyword>
<keyword id="KW-0694">RNA-binding</keyword>
<keyword id="KW-0820">tRNA-binding</keyword>
<keyword id="KW-0862">Zinc</keyword>
<name>SYT_CLOK1</name>
<accession>B9E5W0</accession>
<sequence>MIKISLKNGKEIEVEKGLKVIDIAAKLSISLSKKALGAVVDGKVVELNYKINKDCKVEILTFEDEEGKKILRHTASHILAQAIKRLYPEVKLAIGPAIDSGFYYDVDAEFSFTPELLEKIEGKMNEIIKENIKLERFELPREEAIKFMEEKNEPYKVELIKDLPEDSIISFYKQGDFVDLCAGPHVPSTGRAKAVKLLSIAGAYWRGNENNKMLQRIYGTVFEKKSDLQDYLKLMEEAKKRDHRKLGKELDLFSIHEEGPGFPFFHPKGMVIRNTLQNFWREMHYKADYSEIMTPIILNEELWHRSGHWDHYKENMYFTKIDDGNYAIKPMNCPGSILVYKNDIRSYRDLPKRYAEMGVVHRHEKSGALHGLMRVRCFTQDDAHIFVTKDDIADEIIKVIDLIDNFYKIFGFEYFVELSTRPEDSMGSDEDWEAATEGLKNALKMVGLDYKINEGDGAFYGPKIDFHLKDCIGRTWQCGTVQLDFQMPEKFDLNYIGADGEKHRPVMIHRVVFGSIERFIGILIEHYAGAFPAWIAPVQVQVMNITDAQADYVAEVAKTLKENNIRVECDIRNEKIGYKIREAQMHKVPYMIILGDKEMKDKNISVRSRKEGDIGAMSLEDFILKLKEEIDKKISHV</sequence>
<evidence type="ECO:0000255" key="1">
    <source>
        <dbReference type="HAMAP-Rule" id="MF_00184"/>
    </source>
</evidence>
<evidence type="ECO:0000255" key="2">
    <source>
        <dbReference type="PROSITE-ProRule" id="PRU01228"/>
    </source>
</evidence>
<protein>
    <recommendedName>
        <fullName evidence="1">Threonine--tRNA ligase</fullName>
        <ecNumber evidence="1">6.1.1.3</ecNumber>
    </recommendedName>
    <alternativeName>
        <fullName evidence="1">Threonyl-tRNA synthetase</fullName>
        <shortName evidence="1">ThrRS</shortName>
    </alternativeName>
</protein>
<comment type="function">
    <text evidence="1">Catalyzes the attachment of threonine to tRNA(Thr) in a two-step reaction: L-threonine is first activated by ATP to form Thr-AMP and then transferred to the acceptor end of tRNA(Thr). Also edits incorrectly charged L-seryl-tRNA(Thr).</text>
</comment>
<comment type="catalytic activity">
    <reaction evidence="1">
        <text>tRNA(Thr) + L-threonine + ATP = L-threonyl-tRNA(Thr) + AMP + diphosphate + H(+)</text>
        <dbReference type="Rhea" id="RHEA:24624"/>
        <dbReference type="Rhea" id="RHEA-COMP:9670"/>
        <dbReference type="Rhea" id="RHEA-COMP:9704"/>
        <dbReference type="ChEBI" id="CHEBI:15378"/>
        <dbReference type="ChEBI" id="CHEBI:30616"/>
        <dbReference type="ChEBI" id="CHEBI:33019"/>
        <dbReference type="ChEBI" id="CHEBI:57926"/>
        <dbReference type="ChEBI" id="CHEBI:78442"/>
        <dbReference type="ChEBI" id="CHEBI:78534"/>
        <dbReference type="ChEBI" id="CHEBI:456215"/>
        <dbReference type="EC" id="6.1.1.3"/>
    </reaction>
</comment>
<comment type="cofactor">
    <cofactor evidence="1">
        <name>Zn(2+)</name>
        <dbReference type="ChEBI" id="CHEBI:29105"/>
    </cofactor>
    <text evidence="1">Binds 1 zinc ion per subunit.</text>
</comment>
<comment type="subunit">
    <text evidence="1">Homodimer.</text>
</comment>
<comment type="subcellular location">
    <subcellularLocation>
        <location evidence="1">Cytoplasm</location>
    </subcellularLocation>
</comment>
<comment type="similarity">
    <text evidence="1">Belongs to the class-II aminoacyl-tRNA synthetase family.</text>
</comment>
<feature type="chain" id="PRO_1000199538" description="Threonine--tRNA ligase">
    <location>
        <begin position="1"/>
        <end position="637"/>
    </location>
</feature>
<feature type="domain" description="TGS" evidence="2">
    <location>
        <begin position="1"/>
        <end position="61"/>
    </location>
</feature>
<feature type="region of interest" description="Catalytic" evidence="1">
    <location>
        <begin position="242"/>
        <end position="532"/>
    </location>
</feature>
<feature type="binding site" evidence="1">
    <location>
        <position position="333"/>
    </location>
    <ligand>
        <name>Zn(2+)</name>
        <dbReference type="ChEBI" id="CHEBI:29105"/>
    </ligand>
</feature>
<feature type="binding site" evidence="1">
    <location>
        <position position="384"/>
    </location>
    <ligand>
        <name>Zn(2+)</name>
        <dbReference type="ChEBI" id="CHEBI:29105"/>
    </ligand>
</feature>
<feature type="binding site" evidence="1">
    <location>
        <position position="509"/>
    </location>
    <ligand>
        <name>Zn(2+)</name>
        <dbReference type="ChEBI" id="CHEBI:29105"/>
    </ligand>
</feature>
<reference key="1">
    <citation type="submission" date="2005-09" db="EMBL/GenBank/DDBJ databases">
        <title>Complete genome sequence of Clostridium kluyveri and comparative genomics of Clostridia species.</title>
        <authorList>
            <person name="Inui M."/>
            <person name="Nonaka H."/>
            <person name="Shinoda Y."/>
            <person name="Ikenaga Y."/>
            <person name="Abe M."/>
            <person name="Naito K."/>
            <person name="Vertes A.A."/>
            <person name="Yukawa H."/>
        </authorList>
    </citation>
    <scope>NUCLEOTIDE SEQUENCE [LARGE SCALE GENOMIC DNA]</scope>
    <source>
        <strain>NBRC 12016</strain>
    </source>
</reference>
<organism>
    <name type="scientific">Clostridium kluyveri (strain NBRC 12016)</name>
    <dbReference type="NCBI Taxonomy" id="583346"/>
    <lineage>
        <taxon>Bacteria</taxon>
        <taxon>Bacillati</taxon>
        <taxon>Bacillota</taxon>
        <taxon>Clostridia</taxon>
        <taxon>Eubacteriales</taxon>
        <taxon>Clostridiaceae</taxon>
        <taxon>Clostridium</taxon>
    </lineage>
</organism>
<proteinExistence type="inferred from homology"/>
<gene>
    <name evidence="1" type="primary">thrS</name>
    <name type="ordered locus">CKR_2834</name>
</gene>